<comment type="function">
    <text evidence="1">Binds to 23S rRNA. Forms part of two intersubunit bridges in the 70S ribosome.</text>
</comment>
<comment type="subunit">
    <text evidence="1">Part of the 50S ribosomal subunit. Forms a cluster with proteins L3 and L19. In the 70S ribosome, L14 and L19 interact and together make contacts with the 16S rRNA in bridges B5 and B8.</text>
</comment>
<comment type="similarity">
    <text evidence="1">Belongs to the universal ribosomal protein uL14 family.</text>
</comment>
<keyword id="KW-1185">Reference proteome</keyword>
<keyword id="KW-0687">Ribonucleoprotein</keyword>
<keyword id="KW-0689">Ribosomal protein</keyword>
<keyword id="KW-0694">RNA-binding</keyword>
<keyword id="KW-0699">rRNA-binding</keyword>
<feature type="chain" id="PRO_0000266451" description="Large ribosomal subunit protein uL14">
    <location>
        <begin position="1"/>
        <end position="122"/>
    </location>
</feature>
<reference key="1">
    <citation type="journal article" date="2004" name="Science">
        <title>A predator unmasked: life cycle of Bdellovibrio bacteriovorus from a genomic perspective.</title>
        <authorList>
            <person name="Rendulic S."/>
            <person name="Jagtap P."/>
            <person name="Rosinus A."/>
            <person name="Eppinger M."/>
            <person name="Baar C."/>
            <person name="Lanz C."/>
            <person name="Keller H."/>
            <person name="Lambert C."/>
            <person name="Evans K.J."/>
            <person name="Goesmann A."/>
            <person name="Meyer F."/>
            <person name="Sockett R.E."/>
            <person name="Schuster S.C."/>
        </authorList>
    </citation>
    <scope>NUCLEOTIDE SEQUENCE [LARGE SCALE GENOMIC DNA]</scope>
    <source>
        <strain>ATCC 15356 / DSM 50701 / NCIMB 9529 / HD100</strain>
    </source>
</reference>
<gene>
    <name evidence="1" type="primary">rplN</name>
    <name type="ordered locus">Bd2965</name>
</gene>
<dbReference type="EMBL" id="BX842654">
    <property type="protein sequence ID" value="CAE80738.1"/>
    <property type="molecule type" value="Genomic_DNA"/>
</dbReference>
<dbReference type="RefSeq" id="WP_011165342.1">
    <property type="nucleotide sequence ID" value="NC_005363.1"/>
</dbReference>
<dbReference type="SMR" id="Q6MJ24"/>
<dbReference type="STRING" id="264462.Bd2965"/>
<dbReference type="GeneID" id="93013829"/>
<dbReference type="KEGG" id="bba:Bd2965"/>
<dbReference type="eggNOG" id="COG0093">
    <property type="taxonomic scope" value="Bacteria"/>
</dbReference>
<dbReference type="HOGENOM" id="CLU_095071_2_1_7"/>
<dbReference type="Proteomes" id="UP000008080">
    <property type="component" value="Chromosome"/>
</dbReference>
<dbReference type="GO" id="GO:0022625">
    <property type="term" value="C:cytosolic large ribosomal subunit"/>
    <property type="evidence" value="ECO:0007669"/>
    <property type="project" value="TreeGrafter"/>
</dbReference>
<dbReference type="GO" id="GO:0070180">
    <property type="term" value="F:large ribosomal subunit rRNA binding"/>
    <property type="evidence" value="ECO:0007669"/>
    <property type="project" value="TreeGrafter"/>
</dbReference>
<dbReference type="GO" id="GO:0003735">
    <property type="term" value="F:structural constituent of ribosome"/>
    <property type="evidence" value="ECO:0007669"/>
    <property type="project" value="InterPro"/>
</dbReference>
<dbReference type="GO" id="GO:0006412">
    <property type="term" value="P:translation"/>
    <property type="evidence" value="ECO:0007669"/>
    <property type="project" value="UniProtKB-UniRule"/>
</dbReference>
<dbReference type="CDD" id="cd00337">
    <property type="entry name" value="Ribosomal_uL14"/>
    <property type="match status" value="1"/>
</dbReference>
<dbReference type="FunFam" id="2.40.150.20:FF:000001">
    <property type="entry name" value="50S ribosomal protein L14"/>
    <property type="match status" value="1"/>
</dbReference>
<dbReference type="Gene3D" id="2.40.150.20">
    <property type="entry name" value="Ribosomal protein L14"/>
    <property type="match status" value="1"/>
</dbReference>
<dbReference type="HAMAP" id="MF_01367">
    <property type="entry name" value="Ribosomal_uL14"/>
    <property type="match status" value="1"/>
</dbReference>
<dbReference type="InterPro" id="IPR000218">
    <property type="entry name" value="Ribosomal_uL14"/>
</dbReference>
<dbReference type="InterPro" id="IPR005745">
    <property type="entry name" value="Ribosomal_uL14_bac-type"/>
</dbReference>
<dbReference type="InterPro" id="IPR019972">
    <property type="entry name" value="Ribosomal_uL14_CS"/>
</dbReference>
<dbReference type="InterPro" id="IPR036853">
    <property type="entry name" value="Ribosomal_uL14_sf"/>
</dbReference>
<dbReference type="NCBIfam" id="TIGR01067">
    <property type="entry name" value="rplN_bact"/>
    <property type="match status" value="1"/>
</dbReference>
<dbReference type="PANTHER" id="PTHR11761">
    <property type="entry name" value="50S/60S RIBOSOMAL PROTEIN L14/L23"/>
    <property type="match status" value="1"/>
</dbReference>
<dbReference type="PANTHER" id="PTHR11761:SF3">
    <property type="entry name" value="LARGE RIBOSOMAL SUBUNIT PROTEIN UL14M"/>
    <property type="match status" value="1"/>
</dbReference>
<dbReference type="Pfam" id="PF00238">
    <property type="entry name" value="Ribosomal_L14"/>
    <property type="match status" value="1"/>
</dbReference>
<dbReference type="SMART" id="SM01374">
    <property type="entry name" value="Ribosomal_L14"/>
    <property type="match status" value="1"/>
</dbReference>
<dbReference type="SUPFAM" id="SSF50193">
    <property type="entry name" value="Ribosomal protein L14"/>
    <property type="match status" value="1"/>
</dbReference>
<dbReference type="PROSITE" id="PS00049">
    <property type="entry name" value="RIBOSOMAL_L14"/>
    <property type="match status" value="1"/>
</dbReference>
<protein>
    <recommendedName>
        <fullName evidence="1">Large ribosomal subunit protein uL14</fullName>
    </recommendedName>
    <alternativeName>
        <fullName evidence="2">50S ribosomal protein L14</fullName>
    </alternativeName>
</protein>
<accession>Q6MJ24</accession>
<name>RL14_BDEBA</name>
<proteinExistence type="inferred from homology"/>
<organism>
    <name type="scientific">Bdellovibrio bacteriovorus (strain ATCC 15356 / DSM 50701 / NCIMB 9529 / HD100)</name>
    <dbReference type="NCBI Taxonomy" id="264462"/>
    <lineage>
        <taxon>Bacteria</taxon>
        <taxon>Pseudomonadati</taxon>
        <taxon>Bdellovibrionota</taxon>
        <taxon>Bdellovibrionia</taxon>
        <taxon>Bdellovibrionales</taxon>
        <taxon>Pseudobdellovibrionaceae</taxon>
        <taxon>Bdellovibrio</taxon>
    </lineage>
</organism>
<evidence type="ECO:0000255" key="1">
    <source>
        <dbReference type="HAMAP-Rule" id="MF_01367"/>
    </source>
</evidence>
<evidence type="ECO:0000305" key="2"/>
<sequence>MIQMQTRLNVADNSGAKEVMCVKVLGGSKRRVASIGDVIVVSIKEALPNAKVKKGDVAKAVVVRTVAKLRRPDGSYIRFDDNSAVLINASKEPIGTRIFGPVARELRAKSFVKIVSLAPEVL</sequence>